<feature type="chain" id="PRO_0000318321" description="Protein translocase subunit SecA 2">
    <location>
        <begin position="1"/>
        <end position="788"/>
    </location>
</feature>
<feature type="binding site" evidence="1">
    <location>
        <position position="86"/>
    </location>
    <ligand>
        <name>ATP</name>
        <dbReference type="ChEBI" id="CHEBI:30616"/>
    </ligand>
</feature>
<feature type="binding site" evidence="1">
    <location>
        <begin position="104"/>
        <end position="108"/>
    </location>
    <ligand>
        <name>ATP</name>
        <dbReference type="ChEBI" id="CHEBI:30616"/>
    </ligand>
</feature>
<feature type="binding site" evidence="1">
    <location>
        <position position="493"/>
    </location>
    <ligand>
        <name>ATP</name>
        <dbReference type="ChEBI" id="CHEBI:30616"/>
    </ligand>
</feature>
<gene>
    <name evidence="1" type="primary">secA2</name>
    <name type="ordered locus">BALH_0795</name>
</gene>
<name>SECA2_BACAH</name>
<proteinExistence type="inferred from homology"/>
<dbReference type="EC" id="7.4.2.8" evidence="1"/>
<dbReference type="EMBL" id="CP000485">
    <property type="protein sequence ID" value="ABK84171.1"/>
    <property type="status" value="ALT_INIT"/>
    <property type="molecule type" value="Genomic_DNA"/>
</dbReference>
<dbReference type="RefSeq" id="WP_000935171.1">
    <property type="nucleotide sequence ID" value="NC_008600.1"/>
</dbReference>
<dbReference type="SMR" id="A0RAC8"/>
<dbReference type="KEGG" id="btl:BALH_0795"/>
<dbReference type="HOGENOM" id="CLU_005314_3_2_9"/>
<dbReference type="GO" id="GO:0031522">
    <property type="term" value="C:cell envelope Sec protein transport complex"/>
    <property type="evidence" value="ECO:0007669"/>
    <property type="project" value="TreeGrafter"/>
</dbReference>
<dbReference type="GO" id="GO:0005829">
    <property type="term" value="C:cytosol"/>
    <property type="evidence" value="ECO:0007669"/>
    <property type="project" value="TreeGrafter"/>
</dbReference>
<dbReference type="GO" id="GO:0005886">
    <property type="term" value="C:plasma membrane"/>
    <property type="evidence" value="ECO:0007669"/>
    <property type="project" value="UniProtKB-SubCell"/>
</dbReference>
<dbReference type="GO" id="GO:0005524">
    <property type="term" value="F:ATP binding"/>
    <property type="evidence" value="ECO:0007669"/>
    <property type="project" value="UniProtKB-UniRule"/>
</dbReference>
<dbReference type="GO" id="GO:0008564">
    <property type="term" value="F:protein-exporting ATPase activity"/>
    <property type="evidence" value="ECO:0007669"/>
    <property type="project" value="UniProtKB-EC"/>
</dbReference>
<dbReference type="GO" id="GO:0065002">
    <property type="term" value="P:intracellular protein transmembrane transport"/>
    <property type="evidence" value="ECO:0007669"/>
    <property type="project" value="UniProtKB-UniRule"/>
</dbReference>
<dbReference type="GO" id="GO:0017038">
    <property type="term" value="P:protein import"/>
    <property type="evidence" value="ECO:0007669"/>
    <property type="project" value="InterPro"/>
</dbReference>
<dbReference type="GO" id="GO:0006605">
    <property type="term" value="P:protein targeting"/>
    <property type="evidence" value="ECO:0007669"/>
    <property type="project" value="UniProtKB-UniRule"/>
</dbReference>
<dbReference type="GO" id="GO:0043952">
    <property type="term" value="P:protein transport by the Sec complex"/>
    <property type="evidence" value="ECO:0007669"/>
    <property type="project" value="TreeGrafter"/>
</dbReference>
<dbReference type="CDD" id="cd17928">
    <property type="entry name" value="DEXDc_SecA"/>
    <property type="match status" value="1"/>
</dbReference>
<dbReference type="CDD" id="cd18803">
    <property type="entry name" value="SF2_C_secA"/>
    <property type="match status" value="1"/>
</dbReference>
<dbReference type="FunFam" id="3.40.50.300:FF:000429">
    <property type="entry name" value="Preprotein translocase subunit SecA"/>
    <property type="match status" value="1"/>
</dbReference>
<dbReference type="Gene3D" id="1.10.3060.10">
    <property type="entry name" value="Helical scaffold and wing domains of SecA"/>
    <property type="match status" value="1"/>
</dbReference>
<dbReference type="Gene3D" id="3.40.50.300">
    <property type="entry name" value="P-loop containing nucleotide triphosphate hydrolases"/>
    <property type="match status" value="3"/>
</dbReference>
<dbReference type="Gene3D" id="3.90.1440.10">
    <property type="entry name" value="SecA, preprotein cross-linking domain"/>
    <property type="match status" value="1"/>
</dbReference>
<dbReference type="HAMAP" id="MF_01382">
    <property type="entry name" value="SecA"/>
    <property type="match status" value="1"/>
</dbReference>
<dbReference type="InterPro" id="IPR014001">
    <property type="entry name" value="Helicase_ATP-bd"/>
</dbReference>
<dbReference type="InterPro" id="IPR001650">
    <property type="entry name" value="Helicase_C-like"/>
</dbReference>
<dbReference type="InterPro" id="IPR027417">
    <property type="entry name" value="P-loop_NTPase"/>
</dbReference>
<dbReference type="InterPro" id="IPR000185">
    <property type="entry name" value="SecA"/>
</dbReference>
<dbReference type="InterPro" id="IPR030908">
    <property type="entry name" value="SecA2_Bac_anthr"/>
</dbReference>
<dbReference type="InterPro" id="IPR020937">
    <property type="entry name" value="SecA_CS"/>
</dbReference>
<dbReference type="InterPro" id="IPR011115">
    <property type="entry name" value="SecA_DEAD"/>
</dbReference>
<dbReference type="InterPro" id="IPR014018">
    <property type="entry name" value="SecA_motor_DEAD"/>
</dbReference>
<dbReference type="InterPro" id="IPR011130">
    <property type="entry name" value="SecA_preprotein_X-link_dom"/>
</dbReference>
<dbReference type="InterPro" id="IPR044722">
    <property type="entry name" value="SecA_SF2_C"/>
</dbReference>
<dbReference type="InterPro" id="IPR011116">
    <property type="entry name" value="SecA_Wing/Scaffold"/>
</dbReference>
<dbReference type="InterPro" id="IPR036266">
    <property type="entry name" value="SecA_Wing/Scaffold_sf"/>
</dbReference>
<dbReference type="InterPro" id="IPR036670">
    <property type="entry name" value="SecA_X-link_sf"/>
</dbReference>
<dbReference type="NCBIfam" id="NF006630">
    <property type="entry name" value="PRK09200.1"/>
    <property type="match status" value="1"/>
</dbReference>
<dbReference type="NCBIfam" id="TIGR00963">
    <property type="entry name" value="secA"/>
    <property type="match status" value="1"/>
</dbReference>
<dbReference type="NCBIfam" id="TIGR04397">
    <property type="entry name" value="SecA2_Bac_anthr"/>
    <property type="match status" value="1"/>
</dbReference>
<dbReference type="PANTHER" id="PTHR30612:SF0">
    <property type="entry name" value="CHLOROPLAST PROTEIN-TRANSPORTING ATPASE"/>
    <property type="match status" value="1"/>
</dbReference>
<dbReference type="PANTHER" id="PTHR30612">
    <property type="entry name" value="SECA INNER MEMBRANE COMPONENT OF SEC PROTEIN SECRETION SYSTEM"/>
    <property type="match status" value="1"/>
</dbReference>
<dbReference type="Pfam" id="PF21090">
    <property type="entry name" value="P-loop_SecA"/>
    <property type="match status" value="2"/>
</dbReference>
<dbReference type="Pfam" id="PF07517">
    <property type="entry name" value="SecA_DEAD"/>
    <property type="match status" value="1"/>
</dbReference>
<dbReference type="Pfam" id="PF01043">
    <property type="entry name" value="SecA_PP_bind"/>
    <property type="match status" value="1"/>
</dbReference>
<dbReference type="Pfam" id="PF07516">
    <property type="entry name" value="SecA_SW"/>
    <property type="match status" value="1"/>
</dbReference>
<dbReference type="PRINTS" id="PR00906">
    <property type="entry name" value="SECA"/>
</dbReference>
<dbReference type="SMART" id="SM00957">
    <property type="entry name" value="SecA_DEAD"/>
    <property type="match status" value="1"/>
</dbReference>
<dbReference type="SMART" id="SM00958">
    <property type="entry name" value="SecA_PP_bind"/>
    <property type="match status" value="1"/>
</dbReference>
<dbReference type="SUPFAM" id="SSF81886">
    <property type="entry name" value="Helical scaffold and wing domains of SecA"/>
    <property type="match status" value="1"/>
</dbReference>
<dbReference type="SUPFAM" id="SSF52540">
    <property type="entry name" value="P-loop containing nucleoside triphosphate hydrolases"/>
    <property type="match status" value="2"/>
</dbReference>
<dbReference type="SUPFAM" id="SSF81767">
    <property type="entry name" value="Pre-protein crosslinking domain of SecA"/>
    <property type="match status" value="1"/>
</dbReference>
<dbReference type="PROSITE" id="PS01312">
    <property type="entry name" value="SECA"/>
    <property type="match status" value="1"/>
</dbReference>
<dbReference type="PROSITE" id="PS51196">
    <property type="entry name" value="SECA_MOTOR_DEAD"/>
    <property type="match status" value="1"/>
</dbReference>
<protein>
    <recommendedName>
        <fullName evidence="1">Protein translocase subunit SecA 2</fullName>
        <ecNumber evidence="1">7.4.2.8</ecNumber>
    </recommendedName>
</protein>
<comment type="function">
    <text evidence="1">Part of the Sec protein translocase complex. Interacts with the SecYEG preprotein conducting channel. Has a central role in coupling the hydrolysis of ATP to the transfer of proteins into and across the cell membrane, serving as an ATP-driven molecular motor driving the stepwise translocation of polypeptide chains across the membrane.</text>
</comment>
<comment type="catalytic activity">
    <reaction evidence="1">
        <text>ATP + H2O + cellular proteinSide 1 = ADP + phosphate + cellular proteinSide 2.</text>
        <dbReference type="EC" id="7.4.2.8"/>
    </reaction>
</comment>
<comment type="subunit">
    <text evidence="1">Monomer and homodimer. Part of the essential Sec protein translocation apparatus which comprises SecA, SecYEG and auxiliary proteins SecDF. Other proteins may also be involved.</text>
</comment>
<comment type="subcellular location">
    <subcellularLocation>
        <location evidence="1">Cell membrane</location>
        <topology evidence="1">Peripheral membrane protein</topology>
        <orientation evidence="1">Cytoplasmic side</orientation>
    </subcellularLocation>
    <subcellularLocation>
        <location evidence="1">Cytoplasm</location>
    </subcellularLocation>
    <text evidence="1">Distribution is 50-50.</text>
</comment>
<comment type="similarity">
    <text evidence="1">Belongs to the SecA family.</text>
</comment>
<comment type="sequence caution" evidence="2">
    <conflict type="erroneous initiation">
        <sequence resource="EMBL-CDS" id="ABK84171"/>
    </conflict>
    <text>Extended N-terminus.</text>
</comment>
<keyword id="KW-0067">ATP-binding</keyword>
<keyword id="KW-1003">Cell membrane</keyword>
<keyword id="KW-0963">Cytoplasm</keyword>
<keyword id="KW-0472">Membrane</keyword>
<keyword id="KW-0547">Nucleotide-binding</keyword>
<keyword id="KW-0653">Protein transport</keyword>
<keyword id="KW-1278">Translocase</keyword>
<keyword id="KW-0811">Translocation</keyword>
<keyword id="KW-0813">Transport</keyword>
<sequence length="788" mass="89598">MLNSVKKLLGDSQKRKLKKYEQLVQEINNLEEKLSDLSDEELRHKTITFKDMLRDGKTVDDIKVEAFAVVREAAKRVLGLRHYDVQLIGGLVLLEGNIAEMPTGEGKTLVSSLPTYVRALEGKGVHVITVNDYLAKRDKELIGQVHEFLGLKVGLNIPQIDPFEKKLAYEADITYGIGTEFGFDYLRDNMAASKNEQVQRPYHFAIIDEIDSVLIDEAKTPLIIAGKKSSSSDLHYLCAKVIKSFQDTLHYTYDAESKSASFTEDGIIKIEDLFDIDNLYDLEHQTLYHYMIQALRAHVAFQCDVDYIVHDEKILLVDIFTGRVMDGRSLSDGLHQALEAKEGLEITEENQTQASITIQNFFRMYPALSGMTGTAKTEEKEFNRVYNMEVIPIPTNRPIIREDKKDVVYVTADAKYKAVREDVLKHNKQGRPILIGTMSILQSETVARYLDEANITYQLLNAKSAEQEADLIATAGQKGQITIATNMAGRGTDILLGEGVHELGGLHVIGTERHESRRVDNQLKGRAGRQGDPGSSQFFLSLEDEMLKRFAQEEVEKLTKSLKTDETGLILTAKVHDFVNRTQLICEGSHFSMREYNLKLDDVINDQRNVIYKLRNNLLQEDTNMIEIIIPMIDHAVEAISKQYLVEGMLPEEWDFASLTASLNEILSVENMPSLSANNVHSPEDLQSVLKETLSLYKERVNELDSHTDLQQSLRYVALHFLDQNWVNHLDAMTHLKEGIGLRQYQQEDPTRLYQKEALDIFLYTYGNFEKEMCRYVARHLGVPENVQ</sequence>
<reference key="1">
    <citation type="journal article" date="2007" name="J. Bacteriol.">
        <title>The complete genome sequence of Bacillus thuringiensis Al Hakam.</title>
        <authorList>
            <person name="Challacombe J.F."/>
            <person name="Altherr M.R."/>
            <person name="Xie G."/>
            <person name="Bhotika S.S."/>
            <person name="Brown N."/>
            <person name="Bruce D."/>
            <person name="Campbell C.S."/>
            <person name="Campbell M.L."/>
            <person name="Chen J."/>
            <person name="Chertkov O."/>
            <person name="Cleland C."/>
            <person name="Dimitrijevic M."/>
            <person name="Doggett N.A."/>
            <person name="Fawcett J.J."/>
            <person name="Glavina T."/>
            <person name="Goodwin L.A."/>
            <person name="Green L.D."/>
            <person name="Han C.S."/>
            <person name="Hill K.K."/>
            <person name="Hitchcock P."/>
            <person name="Jackson P.J."/>
            <person name="Keim P."/>
            <person name="Kewalramani A.R."/>
            <person name="Longmire J."/>
            <person name="Lucas S."/>
            <person name="Malfatti S."/>
            <person name="Martinez D."/>
            <person name="McMurry K."/>
            <person name="Meincke L.J."/>
            <person name="Misra M."/>
            <person name="Moseman B.L."/>
            <person name="Mundt M."/>
            <person name="Munk A.C."/>
            <person name="Okinaka R.T."/>
            <person name="Parson-Quintana B."/>
            <person name="Reilly L.P."/>
            <person name="Richardson P."/>
            <person name="Robinson D.L."/>
            <person name="Saunders E."/>
            <person name="Tapia R."/>
            <person name="Tesmer J.G."/>
            <person name="Thayer N."/>
            <person name="Thompson L.S."/>
            <person name="Tice H."/>
            <person name="Ticknor L.O."/>
            <person name="Wills P.L."/>
            <person name="Gilna P."/>
            <person name="Brettin T.S."/>
        </authorList>
    </citation>
    <scope>NUCLEOTIDE SEQUENCE [LARGE SCALE GENOMIC DNA]</scope>
    <source>
        <strain>Al Hakam</strain>
    </source>
</reference>
<accession>A0RAC8</accession>
<evidence type="ECO:0000255" key="1">
    <source>
        <dbReference type="HAMAP-Rule" id="MF_01382"/>
    </source>
</evidence>
<evidence type="ECO:0000305" key="2"/>
<organism>
    <name type="scientific">Bacillus thuringiensis (strain Al Hakam)</name>
    <dbReference type="NCBI Taxonomy" id="412694"/>
    <lineage>
        <taxon>Bacteria</taxon>
        <taxon>Bacillati</taxon>
        <taxon>Bacillota</taxon>
        <taxon>Bacilli</taxon>
        <taxon>Bacillales</taxon>
        <taxon>Bacillaceae</taxon>
        <taxon>Bacillus</taxon>
        <taxon>Bacillus cereus group</taxon>
    </lineage>
</organism>